<dbReference type="PIR" id="A01738">
    <property type="entry name" value="NTIIRF"/>
</dbReference>
<dbReference type="PDB" id="1QDP">
    <property type="method" value="NMR"/>
    <property type="chains" value="A=1-42"/>
</dbReference>
<dbReference type="PDBsum" id="1QDP"/>
<dbReference type="SMR" id="P01478"/>
<dbReference type="ArachnoServer" id="AS000305">
    <property type="toxin name" value="delta-hexatoxin-Ar1a"/>
</dbReference>
<dbReference type="EvolutionaryTrace" id="P01478"/>
<dbReference type="GO" id="GO:0005576">
    <property type="term" value="C:extracellular region"/>
    <property type="evidence" value="ECO:0007669"/>
    <property type="project" value="UniProtKB-SubCell"/>
</dbReference>
<dbReference type="GO" id="GO:0019871">
    <property type="term" value="F:sodium channel inhibitor activity"/>
    <property type="evidence" value="ECO:0007669"/>
    <property type="project" value="InterPro"/>
</dbReference>
<dbReference type="GO" id="GO:0090729">
    <property type="term" value="F:toxin activity"/>
    <property type="evidence" value="ECO:0007669"/>
    <property type="project" value="UniProtKB-KW"/>
</dbReference>
<dbReference type="Gene3D" id="4.10.40.10">
    <property type="match status" value="1"/>
</dbReference>
<dbReference type="InterPro" id="IPR008017">
    <property type="entry name" value="Delta-hexatoxin"/>
</dbReference>
<dbReference type="Pfam" id="PF05353">
    <property type="entry name" value="Atracotoxin"/>
    <property type="match status" value="1"/>
</dbReference>
<dbReference type="SUPFAM" id="SSF57059">
    <property type="entry name" value="omega toxin-like"/>
    <property type="match status" value="1"/>
</dbReference>
<dbReference type="PROSITE" id="PS60018">
    <property type="entry name" value="DELTA_ACTX"/>
    <property type="match status" value="1"/>
</dbReference>
<evidence type="ECO:0000269" key="1">
    <source>
    </source>
</evidence>
<evidence type="ECO:0000269" key="2">
    <source>
    </source>
</evidence>
<evidence type="ECO:0000269" key="3">
    <source>
    </source>
</evidence>
<evidence type="ECO:0000269" key="4">
    <source>
    </source>
</evidence>
<evidence type="ECO:0000269" key="5">
    <source>
    </source>
</evidence>
<evidence type="ECO:0000269" key="6">
    <source>
    </source>
</evidence>
<evidence type="ECO:0000269" key="7">
    <source>
    </source>
</evidence>
<evidence type="ECO:0000303" key="8">
    <source>
    </source>
</evidence>
<evidence type="ECO:0000303" key="9">
    <source>
    </source>
</evidence>
<evidence type="ECO:0000303" key="10">
    <source>
    </source>
</evidence>
<evidence type="ECO:0000303" key="11">
    <source>
    </source>
</evidence>
<evidence type="ECO:0000303" key="12">
    <source>
    </source>
</evidence>
<evidence type="ECO:0000303" key="13">
    <source>
    </source>
</evidence>
<evidence type="ECO:0000303" key="14">
    <source>
    </source>
</evidence>
<evidence type="ECO:0000305" key="15"/>
<evidence type="ECO:0000305" key="16">
    <source>
    </source>
</evidence>
<evidence type="ECO:0000312" key="17">
    <source>
        <dbReference type="PDB" id="1QDP"/>
    </source>
</evidence>
<evidence type="ECO:0007829" key="18">
    <source>
        <dbReference type="PDB" id="1QDP"/>
    </source>
</evidence>
<proteinExistence type="evidence at protein level"/>
<name>TXDT1_ATRRO</name>
<accession>P01478</accession>
<organism>
    <name type="scientific">Atrax robustus</name>
    <name type="common">Sydney funnel-web spider</name>
    <dbReference type="NCBI Taxonomy" id="6903"/>
    <lineage>
        <taxon>Eukaryota</taxon>
        <taxon>Metazoa</taxon>
        <taxon>Ecdysozoa</taxon>
        <taxon>Arthropoda</taxon>
        <taxon>Chelicerata</taxon>
        <taxon>Arachnida</taxon>
        <taxon>Araneae</taxon>
        <taxon>Mygalomorphae</taxon>
        <taxon>Hexathelidae</taxon>
        <taxon>Atrax</taxon>
    </lineage>
</organism>
<comment type="function">
    <text evidence="2 3 6 7">Inhibits tetrodotoxin-sensitive voltage-gated sodium channels (Nav) by binding to site 3. It slows the inactivation, causes a prolongation of action potential duration resulting in repetitive firing in autonomic and motor nerve fibers. Does not depolarize the resting potential. Does not affect tetrodotoxin-resistant sodium channels. This lethal neurotoxin is active on both insect and mammalian voltage-gated sodium channels.</text>
</comment>
<comment type="subcellular location">
    <subcellularLocation>
        <location evidence="4">Secreted</location>
    </subcellularLocation>
</comment>
<comment type="tissue specificity">
    <text evidence="16">Expressed by the venom gland.</text>
</comment>
<comment type="domain">
    <text evidence="1 5">The presence of a 'disulfide through disulfide knot' structurally defines this protein as a knottin.</text>
</comment>
<comment type="mass spectrometry" mass="4848.7" method="Electrospray" evidence="2"/>
<comment type="miscellaneous">
    <text>In this species, the venom of the male is lethal rather than that of the female.</text>
</comment>
<comment type="similarity">
    <text evidence="15">Belongs to the neurotoxin 06 (delta-actx) family.</text>
</comment>
<reference key="1">
    <citation type="journal article" date="1985" name="FEBS Lett.">
        <title>Complete amino acid sequence of a new type of lethal neurotoxin from the venom of the funnel-web spider Atrax robustus.</title>
        <authorList>
            <person name="Sheumack D.D."/>
            <person name="Claassens R."/>
            <person name="Whiteley N.M."/>
            <person name="Howden M.E.H."/>
        </authorList>
    </citation>
    <scope>PROTEIN SEQUENCE</scope>
    <scope>SUBCELLULAR LOCATION</scope>
    <source>
        <tissue>Venom</tissue>
    </source>
</reference>
<reference key="2">
    <citation type="journal article" date="1989" name="Toxicon">
        <title>Actions of robustoxin, a neurotoxic polypeptide from the venom of the male funnel-web spider (Atrax robustus), in anaesthetized monkeys.</title>
        <authorList>
            <person name="Mylecharane E.J."/>
            <person name="Spence I."/>
            <person name="Sheumack D.D."/>
            <person name="Claassens R."/>
            <person name="Howden M.E."/>
        </authorList>
    </citation>
    <scope>FUNCTION</scope>
</reference>
<reference key="3">
    <citation type="journal article" date="1998" name="FEBS Lett.">
        <title>Delta-atracotoxins from Australian funnel-web spiders compete with scorpion alpha-toxin binding on both rat brain and insect sodium channels.</title>
        <authorList>
            <person name="Little M.J."/>
            <person name="Wilson H."/>
            <person name="Zappia C."/>
            <person name="Cestele S."/>
            <person name="Tyler M.I."/>
            <person name="Martin-Eauclaire M.-F."/>
            <person name="Gordon D."/>
            <person name="Nicholson G.M."/>
        </authorList>
    </citation>
    <scope>FUNCTION</scope>
</reference>
<reference key="4">
    <citation type="journal article" date="1998" name="Pflugers Arch.">
        <title>Characterisation of the effects of robustoxin, the lethal neurotoxin from the Sydney funnel-web spider Atrax robustus, on sodium channel activation and inactivation.</title>
        <authorList>
            <person name="Nicholson G.M."/>
            <person name="Walsh R."/>
            <person name="Little M.J."/>
            <person name="Tyler M.I."/>
        </authorList>
    </citation>
    <scope>FUNCTION</scope>
    <source>
        <tissue>Venom</tissue>
    </source>
</reference>
<reference key="5">
    <citation type="journal article" date="2003" name="Biochemistry">
        <title>Synthesis and characterization of delta-atracotoxin-Ar1a, the lethal neurotoxin from venom of the Sydney funnel-web spider (Atrax robustus).</title>
        <authorList>
            <person name="Alewood D."/>
            <person name="Birinyi-Strachan L.C."/>
            <person name="Pallaghy P.K."/>
            <person name="Norton R.S."/>
            <person name="Nicholson G.M."/>
            <person name="Alewood P.F."/>
        </authorList>
    </citation>
    <scope>FUNCTION</scope>
    <scope>MASS SPECTROMETRY</scope>
    <scope>SYNTHESIS</scope>
</reference>
<reference key="6">
    <citation type="journal article" date="1997" name="FEBS Lett.">
        <title>Solution structure of robustoxin, the lethal neurotoxin from the funnel-web spider Atrax robustus.</title>
        <authorList>
            <person name="Pallaghy P.K."/>
            <person name="Alewood D."/>
            <person name="Alewood P.F."/>
            <person name="Norton R.S."/>
        </authorList>
    </citation>
    <scope>STRUCTURE BY NMR</scope>
    <scope>DISULFIDE BONDS</scope>
</reference>
<reference key="7">
    <citation type="journal article" date="1999" name="Toxicon">
        <title>1H NMR study of robustoxin, the lethal neurotoxin from the funnel web spider Atrax robustus.</title>
        <authorList>
            <person name="Temple M.D."/>
            <person name="Hinds M.G."/>
            <person name="Sheumack D.D."/>
            <person name="Howden M.E."/>
            <person name="Norton R.S."/>
        </authorList>
    </citation>
    <scope>STRUCTURE BY NMR</scope>
    <scope>DISULFIDE BONDS</scope>
</reference>
<protein>
    <recommendedName>
        <fullName evidence="15">Delta-hexatoxin-Ar1a</fullName>
        <shortName evidence="15">Delta-HXTX-Ar1a</shortName>
    </recommendedName>
    <alternativeName>
        <fullName evidence="13 14">Delta-atracotoxin-Ar1</fullName>
    </alternativeName>
    <alternativeName>
        <fullName evidence="9">Delta-atracotoxin-Ar1a</fullName>
        <shortName evidence="9">Delta-ACTX-Ar1a</shortName>
    </alternativeName>
    <alternativeName>
        <fullName evidence="8 10 11 13">Robustoxin</fullName>
        <shortName evidence="8 12">RBX</shortName>
    </alternativeName>
</protein>
<keyword id="KW-0002">3D-structure</keyword>
<keyword id="KW-0903">Direct protein sequencing</keyword>
<keyword id="KW-1015">Disulfide bond</keyword>
<keyword id="KW-0872">Ion channel impairing toxin</keyword>
<keyword id="KW-0960">Knottin</keyword>
<keyword id="KW-0528">Neurotoxin</keyword>
<keyword id="KW-0964">Secreted</keyword>
<keyword id="KW-0800">Toxin</keyword>
<keyword id="KW-0738">Voltage-gated sodium channel impairing toxin</keyword>
<feature type="chain" id="PRO_0000087653" description="Delta-hexatoxin-Ar1a" evidence="4">
    <location>
        <begin position="1"/>
        <end position="42"/>
    </location>
</feature>
<feature type="disulfide bond" evidence="1 5 17">
    <location>
        <begin position="1"/>
        <end position="15"/>
    </location>
</feature>
<feature type="disulfide bond" evidence="1 5 17">
    <location>
        <begin position="8"/>
        <end position="20"/>
    </location>
</feature>
<feature type="disulfide bond" evidence="1 5 17">
    <location>
        <begin position="14"/>
        <end position="31"/>
    </location>
</feature>
<feature type="disulfide bond" evidence="1 5 17">
    <location>
        <begin position="16"/>
        <end position="42"/>
    </location>
</feature>
<feature type="strand" evidence="18">
    <location>
        <begin position="19"/>
        <end position="21"/>
    </location>
</feature>
<feature type="strand" evidence="18">
    <location>
        <begin position="30"/>
        <end position="33"/>
    </location>
</feature>
<feature type="turn" evidence="18">
    <location>
        <begin position="37"/>
        <end position="39"/>
    </location>
</feature>
<sequence length="42" mass="4857">CAKKRNWCGKNEDCCCPMKCIYAWYNQQGSCQTTITGLFKKC</sequence>